<evidence type="ECO:0000255" key="1">
    <source>
        <dbReference type="HAMAP-Rule" id="MF_01220"/>
    </source>
</evidence>
<protein>
    <recommendedName>
        <fullName evidence="1">Uridylate kinase</fullName>
        <shortName evidence="1">UK</shortName>
        <ecNumber evidence="1">2.7.4.22</ecNumber>
    </recommendedName>
    <alternativeName>
        <fullName evidence="1">Uridine monophosphate kinase</fullName>
        <shortName evidence="1">UMP kinase</shortName>
        <shortName evidence="1">UMPK</shortName>
    </alternativeName>
</protein>
<sequence>MKVVVSIGGSVLAPDLDADRVADYADAIQSLDAQGHTLGTVVGGGPTARDYIGSARDLGANEIELDQLGIAVTRLNGRLLIAALDDRAAPTPAESYDEGREAIRRGDIPVLGGIVAAQTTDAVAAAFAEYVGADLLVYATSVPGVYNADPNEDDDATRFDELGADELVDVIADIEMDAGSSAPVDLLAAKIIQRSGIRTMVLDGTDPERVVRAVEDGEFDGSEILPEA</sequence>
<comment type="function">
    <text evidence="1">Catalyzes the reversible phosphorylation of UMP to UDP.</text>
</comment>
<comment type="catalytic activity">
    <reaction evidence="1">
        <text>UMP + ATP = UDP + ADP</text>
        <dbReference type="Rhea" id="RHEA:24400"/>
        <dbReference type="ChEBI" id="CHEBI:30616"/>
        <dbReference type="ChEBI" id="CHEBI:57865"/>
        <dbReference type="ChEBI" id="CHEBI:58223"/>
        <dbReference type="ChEBI" id="CHEBI:456216"/>
        <dbReference type="EC" id="2.7.4.22"/>
    </reaction>
</comment>
<comment type="activity regulation">
    <text evidence="1">Inhibited by UTP.</text>
</comment>
<comment type="pathway">
    <text evidence="1">Pyrimidine metabolism; CTP biosynthesis via de novo pathway; UDP from UMP (UMPK route): step 1/1.</text>
</comment>
<comment type="subunit">
    <text evidence="1">Homohexamer.</text>
</comment>
<comment type="subcellular location">
    <subcellularLocation>
        <location evidence="1">Cytoplasm</location>
    </subcellularLocation>
</comment>
<comment type="similarity">
    <text evidence="1">Belongs to the UMP kinase family.</text>
</comment>
<feature type="chain" id="PRO_1000053932" description="Uridylate kinase">
    <location>
        <begin position="1"/>
        <end position="228"/>
    </location>
</feature>
<feature type="binding site" evidence="1">
    <location>
        <begin position="9"/>
        <end position="10"/>
    </location>
    <ligand>
        <name>ATP</name>
        <dbReference type="ChEBI" id="CHEBI:30616"/>
    </ligand>
</feature>
<feature type="binding site" evidence="1">
    <location>
        <position position="44"/>
    </location>
    <ligand>
        <name>UMP</name>
        <dbReference type="ChEBI" id="CHEBI:57865"/>
    </ligand>
</feature>
<feature type="binding site" evidence="1">
    <location>
        <position position="45"/>
    </location>
    <ligand>
        <name>ATP</name>
        <dbReference type="ChEBI" id="CHEBI:30616"/>
    </ligand>
</feature>
<feature type="binding site" evidence="1">
    <location>
        <position position="49"/>
    </location>
    <ligand>
        <name>ATP</name>
        <dbReference type="ChEBI" id="CHEBI:30616"/>
    </ligand>
</feature>
<feature type="binding site" evidence="1">
    <location>
        <position position="66"/>
    </location>
    <ligand>
        <name>UMP</name>
        <dbReference type="ChEBI" id="CHEBI:57865"/>
    </ligand>
</feature>
<feature type="binding site" evidence="1">
    <location>
        <begin position="114"/>
        <end position="120"/>
    </location>
    <ligand>
        <name>UMP</name>
        <dbReference type="ChEBI" id="CHEBI:57865"/>
    </ligand>
</feature>
<feature type="binding site" evidence="1">
    <location>
        <position position="140"/>
    </location>
    <ligand>
        <name>ATP</name>
        <dbReference type="ChEBI" id="CHEBI:30616"/>
    </ligand>
</feature>
<feature type="binding site" evidence="1">
    <location>
        <position position="146"/>
    </location>
    <ligand>
        <name>ATP</name>
        <dbReference type="ChEBI" id="CHEBI:30616"/>
    </ligand>
</feature>
<feature type="binding site" evidence="1">
    <location>
        <position position="149"/>
    </location>
    <ligand>
        <name>ATP</name>
        <dbReference type="ChEBI" id="CHEBI:30616"/>
    </ligand>
</feature>
<gene>
    <name evidence="1" type="primary">pyrH</name>
    <name type="ordered locus">rrnAC3174</name>
</gene>
<name>PYRH_HALMA</name>
<reference key="1">
    <citation type="journal article" date="2004" name="Genome Res.">
        <title>Genome sequence of Haloarcula marismortui: a halophilic archaeon from the Dead Sea.</title>
        <authorList>
            <person name="Baliga N.S."/>
            <person name="Bonneau R."/>
            <person name="Facciotti M.T."/>
            <person name="Pan M."/>
            <person name="Glusman G."/>
            <person name="Deutsch E.W."/>
            <person name="Shannon P."/>
            <person name="Chiu Y."/>
            <person name="Weng R.S."/>
            <person name="Gan R.R."/>
            <person name="Hung P."/>
            <person name="Date S.V."/>
            <person name="Marcotte E."/>
            <person name="Hood L."/>
            <person name="Ng W.V."/>
        </authorList>
    </citation>
    <scope>NUCLEOTIDE SEQUENCE [LARGE SCALE GENOMIC DNA]</scope>
    <source>
        <strain>ATCC 43049 / DSM 3752 / JCM 8966 / VKM B-1809</strain>
    </source>
</reference>
<organism>
    <name type="scientific">Haloarcula marismortui (strain ATCC 43049 / DSM 3752 / JCM 8966 / VKM B-1809)</name>
    <name type="common">Halobacterium marismortui</name>
    <dbReference type="NCBI Taxonomy" id="272569"/>
    <lineage>
        <taxon>Archaea</taxon>
        <taxon>Methanobacteriati</taxon>
        <taxon>Methanobacteriota</taxon>
        <taxon>Stenosarchaea group</taxon>
        <taxon>Halobacteria</taxon>
        <taxon>Halobacteriales</taxon>
        <taxon>Haloarculaceae</taxon>
        <taxon>Haloarcula</taxon>
    </lineage>
</organism>
<dbReference type="EC" id="2.7.4.22" evidence="1"/>
<dbReference type="EMBL" id="AY596297">
    <property type="protein sequence ID" value="AAV47880.1"/>
    <property type="molecule type" value="Genomic_DNA"/>
</dbReference>
<dbReference type="RefSeq" id="WP_011224653.1">
    <property type="nucleotide sequence ID" value="NZ_CP039138.1"/>
</dbReference>
<dbReference type="SMR" id="Q5UXX3"/>
<dbReference type="STRING" id="272569.rrnAC3174"/>
<dbReference type="PaxDb" id="272569-rrnAC3174"/>
<dbReference type="EnsemblBacteria" id="AAV47880">
    <property type="protein sequence ID" value="AAV47880"/>
    <property type="gene ID" value="rrnAC3174"/>
</dbReference>
<dbReference type="GeneID" id="40153981"/>
<dbReference type="KEGG" id="hma:rrnAC3174"/>
<dbReference type="PATRIC" id="fig|272569.17.peg.3714"/>
<dbReference type="eggNOG" id="arCOG00858">
    <property type="taxonomic scope" value="Archaea"/>
</dbReference>
<dbReference type="HOGENOM" id="CLU_079546_0_0_2"/>
<dbReference type="UniPathway" id="UPA00159">
    <property type="reaction ID" value="UER00275"/>
</dbReference>
<dbReference type="Proteomes" id="UP000001169">
    <property type="component" value="Chromosome I"/>
</dbReference>
<dbReference type="GO" id="GO:0005737">
    <property type="term" value="C:cytoplasm"/>
    <property type="evidence" value="ECO:0007669"/>
    <property type="project" value="UniProtKB-SubCell"/>
</dbReference>
<dbReference type="GO" id="GO:0005524">
    <property type="term" value="F:ATP binding"/>
    <property type="evidence" value="ECO:0007669"/>
    <property type="project" value="UniProtKB-KW"/>
</dbReference>
<dbReference type="GO" id="GO:0033862">
    <property type="term" value="F:UMP kinase activity"/>
    <property type="evidence" value="ECO:0007669"/>
    <property type="project" value="UniProtKB-EC"/>
</dbReference>
<dbReference type="GO" id="GO:0044210">
    <property type="term" value="P:'de novo' CTP biosynthetic process"/>
    <property type="evidence" value="ECO:0007669"/>
    <property type="project" value="UniProtKB-UniRule"/>
</dbReference>
<dbReference type="GO" id="GO:0006225">
    <property type="term" value="P:UDP biosynthetic process"/>
    <property type="evidence" value="ECO:0007669"/>
    <property type="project" value="TreeGrafter"/>
</dbReference>
<dbReference type="CDD" id="cd04253">
    <property type="entry name" value="AAK_UMPK-PyrH-Pf"/>
    <property type="match status" value="1"/>
</dbReference>
<dbReference type="Gene3D" id="3.40.1160.10">
    <property type="entry name" value="Acetylglutamate kinase-like"/>
    <property type="match status" value="1"/>
</dbReference>
<dbReference type="HAMAP" id="MF_01220_A">
    <property type="entry name" value="PyrH_A"/>
    <property type="match status" value="1"/>
</dbReference>
<dbReference type="InterPro" id="IPR036393">
    <property type="entry name" value="AceGlu_kinase-like_sf"/>
</dbReference>
<dbReference type="InterPro" id="IPR001048">
    <property type="entry name" value="Asp/Glu/Uridylate_kinase"/>
</dbReference>
<dbReference type="InterPro" id="IPR011817">
    <property type="entry name" value="Uridylate_kinase"/>
</dbReference>
<dbReference type="InterPro" id="IPR011818">
    <property type="entry name" value="Uridylate_kinase_arch/spir"/>
</dbReference>
<dbReference type="NCBIfam" id="TIGR02076">
    <property type="entry name" value="pyrH_arch"/>
    <property type="match status" value="1"/>
</dbReference>
<dbReference type="PANTHER" id="PTHR42833">
    <property type="entry name" value="URIDYLATE KINASE"/>
    <property type="match status" value="1"/>
</dbReference>
<dbReference type="PANTHER" id="PTHR42833:SF4">
    <property type="entry name" value="URIDYLATE KINASE PUMPKIN, CHLOROPLASTIC"/>
    <property type="match status" value="1"/>
</dbReference>
<dbReference type="Pfam" id="PF00696">
    <property type="entry name" value="AA_kinase"/>
    <property type="match status" value="1"/>
</dbReference>
<dbReference type="PIRSF" id="PIRSF005650">
    <property type="entry name" value="Uridylate_kin"/>
    <property type="match status" value="1"/>
</dbReference>
<dbReference type="SUPFAM" id="SSF53633">
    <property type="entry name" value="Carbamate kinase-like"/>
    <property type="match status" value="1"/>
</dbReference>
<proteinExistence type="inferred from homology"/>
<accession>Q5UXX3</accession>
<keyword id="KW-0067">ATP-binding</keyword>
<keyword id="KW-0963">Cytoplasm</keyword>
<keyword id="KW-0418">Kinase</keyword>
<keyword id="KW-0547">Nucleotide-binding</keyword>
<keyword id="KW-0665">Pyrimidine biosynthesis</keyword>
<keyword id="KW-1185">Reference proteome</keyword>
<keyword id="KW-0808">Transferase</keyword>